<feature type="chain" id="PRO_1000090437" description="UDP-N-acetylglucosamine--N-acetylmuramyl-(pentapeptide) pyrophosphoryl-undecaprenol N-acetylglucosamine transferase">
    <location>
        <begin position="1"/>
        <end position="381"/>
    </location>
</feature>
<feature type="binding site" evidence="1">
    <location>
        <begin position="10"/>
        <end position="12"/>
    </location>
    <ligand>
        <name>UDP-N-acetyl-alpha-D-glucosamine</name>
        <dbReference type="ChEBI" id="CHEBI:57705"/>
    </ligand>
</feature>
<feature type="binding site" evidence="1">
    <location>
        <position position="124"/>
    </location>
    <ligand>
        <name>UDP-N-acetyl-alpha-D-glucosamine</name>
        <dbReference type="ChEBI" id="CHEBI:57705"/>
    </ligand>
</feature>
<feature type="binding site" evidence="1">
    <location>
        <position position="165"/>
    </location>
    <ligand>
        <name>UDP-N-acetyl-alpha-D-glucosamine</name>
        <dbReference type="ChEBI" id="CHEBI:57705"/>
    </ligand>
</feature>
<feature type="binding site" evidence="1">
    <location>
        <position position="207"/>
    </location>
    <ligand>
        <name>UDP-N-acetyl-alpha-D-glucosamine</name>
        <dbReference type="ChEBI" id="CHEBI:57705"/>
    </ligand>
</feature>
<feature type="binding site" evidence="1">
    <location>
        <position position="263"/>
    </location>
    <ligand>
        <name>UDP-N-acetyl-alpha-D-glucosamine</name>
        <dbReference type="ChEBI" id="CHEBI:57705"/>
    </ligand>
</feature>
<feature type="binding site" evidence="1">
    <location>
        <position position="308"/>
    </location>
    <ligand>
        <name>UDP-N-acetyl-alpha-D-glucosamine</name>
        <dbReference type="ChEBI" id="CHEBI:57705"/>
    </ligand>
</feature>
<protein>
    <recommendedName>
        <fullName evidence="1">UDP-N-acetylglucosamine--N-acetylmuramyl-(pentapeptide) pyrophosphoryl-undecaprenol N-acetylglucosamine transferase</fullName>
        <ecNumber evidence="1">2.4.1.227</ecNumber>
    </recommendedName>
    <alternativeName>
        <fullName evidence="1">Undecaprenyl-PP-MurNAc-pentapeptide-UDPGlcNAc GlcNAc transferase</fullName>
    </alternativeName>
</protein>
<evidence type="ECO:0000255" key="1">
    <source>
        <dbReference type="HAMAP-Rule" id="MF_00033"/>
    </source>
</evidence>
<accession>B3E3Y2</accession>
<comment type="function">
    <text evidence="1">Cell wall formation. Catalyzes the transfer of a GlcNAc subunit on undecaprenyl-pyrophosphoryl-MurNAc-pentapeptide (lipid intermediate I) to form undecaprenyl-pyrophosphoryl-MurNAc-(pentapeptide)GlcNAc (lipid intermediate II).</text>
</comment>
<comment type="catalytic activity">
    <reaction evidence="1">
        <text>di-trans,octa-cis-undecaprenyl diphospho-N-acetyl-alpha-D-muramoyl-L-alanyl-D-glutamyl-meso-2,6-diaminopimeloyl-D-alanyl-D-alanine + UDP-N-acetyl-alpha-D-glucosamine = di-trans,octa-cis-undecaprenyl diphospho-[N-acetyl-alpha-D-glucosaminyl-(1-&gt;4)]-N-acetyl-alpha-D-muramoyl-L-alanyl-D-glutamyl-meso-2,6-diaminopimeloyl-D-alanyl-D-alanine + UDP + H(+)</text>
        <dbReference type="Rhea" id="RHEA:31227"/>
        <dbReference type="ChEBI" id="CHEBI:15378"/>
        <dbReference type="ChEBI" id="CHEBI:57705"/>
        <dbReference type="ChEBI" id="CHEBI:58223"/>
        <dbReference type="ChEBI" id="CHEBI:61387"/>
        <dbReference type="ChEBI" id="CHEBI:61388"/>
        <dbReference type="EC" id="2.4.1.227"/>
    </reaction>
</comment>
<comment type="pathway">
    <text evidence="1">Cell wall biogenesis; peptidoglycan biosynthesis.</text>
</comment>
<comment type="subcellular location">
    <subcellularLocation>
        <location evidence="1">Cell inner membrane</location>
        <topology evidence="1">Peripheral membrane protein</topology>
        <orientation evidence="1">Cytoplasmic side</orientation>
    </subcellularLocation>
</comment>
<comment type="similarity">
    <text evidence="1">Belongs to the glycosyltransferase 28 family. MurG subfamily.</text>
</comment>
<sequence>MKLIVAGGGTGGHLFPGIAVAEEFLSRDPANQVLFVGSERGIEARAIPRLGYQLELISAAGIRGKGSLAKLKGAAMMIYGYAQSRKILHRFQPDLVLGVGGYASLPMVMAARGMEIPRYIHEQNALPGMSNKVLSRVANKVFISLEESAKFFPKDCTLLTGNPLRKQILEMLTQTETENPPSIPPLLKGGSEPCEQRGFNLFIFGGSQGAHALNVALPQAVAQLSPKQQRLIKIIHQTGEADLQQVQAAYQANGLEADVRPFIDDMATAYRQADLIICRAGATTIAEVTALGKACLFVPFPHATDDHQRKNAEALLKKGACEMLVEQEIGGKGLSEAIARLMENRDALKLIGENAAALARLDAARVIVDQMLEGVQPCTET</sequence>
<reference key="1">
    <citation type="submission" date="2008-05" db="EMBL/GenBank/DDBJ databases">
        <title>Complete sequence of chromosome of Geobacter lovleyi SZ.</title>
        <authorList>
            <consortium name="US DOE Joint Genome Institute"/>
            <person name="Lucas S."/>
            <person name="Copeland A."/>
            <person name="Lapidus A."/>
            <person name="Glavina del Rio T."/>
            <person name="Dalin E."/>
            <person name="Tice H."/>
            <person name="Bruce D."/>
            <person name="Goodwin L."/>
            <person name="Pitluck S."/>
            <person name="Chertkov O."/>
            <person name="Meincke L."/>
            <person name="Brettin T."/>
            <person name="Detter J.C."/>
            <person name="Han C."/>
            <person name="Tapia R."/>
            <person name="Kuske C.R."/>
            <person name="Schmutz J."/>
            <person name="Larimer F."/>
            <person name="Land M."/>
            <person name="Hauser L."/>
            <person name="Kyrpides N."/>
            <person name="Mikhailova N."/>
            <person name="Sung Y."/>
            <person name="Fletcher K.E."/>
            <person name="Ritalahti K.M."/>
            <person name="Loeffler F.E."/>
            <person name="Richardson P."/>
        </authorList>
    </citation>
    <scope>NUCLEOTIDE SEQUENCE [LARGE SCALE GENOMIC DNA]</scope>
    <source>
        <strain>ATCC BAA-1151 / DSM 17278 / SZ</strain>
    </source>
</reference>
<gene>
    <name evidence="1" type="primary">murG</name>
    <name type="ordered locus">Glov_0670</name>
</gene>
<dbReference type="EC" id="2.4.1.227" evidence="1"/>
<dbReference type="EMBL" id="CP001089">
    <property type="protein sequence ID" value="ACD94396.1"/>
    <property type="molecule type" value="Genomic_DNA"/>
</dbReference>
<dbReference type="RefSeq" id="WP_012468752.1">
    <property type="nucleotide sequence ID" value="NC_010814.1"/>
</dbReference>
<dbReference type="SMR" id="B3E3Y2"/>
<dbReference type="STRING" id="398767.Glov_0670"/>
<dbReference type="CAZy" id="GT28">
    <property type="family name" value="Glycosyltransferase Family 28"/>
</dbReference>
<dbReference type="KEGG" id="glo:Glov_0670"/>
<dbReference type="eggNOG" id="COG0707">
    <property type="taxonomic scope" value="Bacteria"/>
</dbReference>
<dbReference type="HOGENOM" id="CLU_037404_0_1_7"/>
<dbReference type="OrthoDB" id="9808936at2"/>
<dbReference type="UniPathway" id="UPA00219"/>
<dbReference type="Proteomes" id="UP000002420">
    <property type="component" value="Chromosome"/>
</dbReference>
<dbReference type="GO" id="GO:0005886">
    <property type="term" value="C:plasma membrane"/>
    <property type="evidence" value="ECO:0007669"/>
    <property type="project" value="UniProtKB-SubCell"/>
</dbReference>
<dbReference type="GO" id="GO:0051991">
    <property type="term" value="F:UDP-N-acetyl-D-glucosamine:N-acetylmuramoyl-L-alanyl-D-glutamyl-meso-2,6-diaminopimelyl-D-alanyl-D-alanine-diphosphoundecaprenol 4-beta-N-acetylglucosaminlytransferase activity"/>
    <property type="evidence" value="ECO:0007669"/>
    <property type="project" value="RHEA"/>
</dbReference>
<dbReference type="GO" id="GO:0050511">
    <property type="term" value="F:undecaprenyldiphospho-muramoylpentapeptide beta-N-acetylglucosaminyltransferase activity"/>
    <property type="evidence" value="ECO:0007669"/>
    <property type="project" value="UniProtKB-UniRule"/>
</dbReference>
<dbReference type="GO" id="GO:0005975">
    <property type="term" value="P:carbohydrate metabolic process"/>
    <property type="evidence" value="ECO:0007669"/>
    <property type="project" value="InterPro"/>
</dbReference>
<dbReference type="GO" id="GO:0051301">
    <property type="term" value="P:cell division"/>
    <property type="evidence" value="ECO:0007669"/>
    <property type="project" value="UniProtKB-KW"/>
</dbReference>
<dbReference type="GO" id="GO:0071555">
    <property type="term" value="P:cell wall organization"/>
    <property type="evidence" value="ECO:0007669"/>
    <property type="project" value="UniProtKB-KW"/>
</dbReference>
<dbReference type="GO" id="GO:0030259">
    <property type="term" value="P:lipid glycosylation"/>
    <property type="evidence" value="ECO:0007669"/>
    <property type="project" value="UniProtKB-UniRule"/>
</dbReference>
<dbReference type="GO" id="GO:0009252">
    <property type="term" value="P:peptidoglycan biosynthetic process"/>
    <property type="evidence" value="ECO:0007669"/>
    <property type="project" value="UniProtKB-UniRule"/>
</dbReference>
<dbReference type="GO" id="GO:0008360">
    <property type="term" value="P:regulation of cell shape"/>
    <property type="evidence" value="ECO:0007669"/>
    <property type="project" value="UniProtKB-KW"/>
</dbReference>
<dbReference type="CDD" id="cd03785">
    <property type="entry name" value="GT28_MurG"/>
    <property type="match status" value="1"/>
</dbReference>
<dbReference type="Gene3D" id="3.40.50.2000">
    <property type="entry name" value="Glycogen Phosphorylase B"/>
    <property type="match status" value="2"/>
</dbReference>
<dbReference type="HAMAP" id="MF_00033">
    <property type="entry name" value="MurG"/>
    <property type="match status" value="1"/>
</dbReference>
<dbReference type="InterPro" id="IPR006009">
    <property type="entry name" value="GlcNAc_MurG"/>
</dbReference>
<dbReference type="InterPro" id="IPR007235">
    <property type="entry name" value="Glyco_trans_28_C"/>
</dbReference>
<dbReference type="InterPro" id="IPR004276">
    <property type="entry name" value="GlycoTrans_28_N"/>
</dbReference>
<dbReference type="NCBIfam" id="TIGR01133">
    <property type="entry name" value="murG"/>
    <property type="match status" value="1"/>
</dbReference>
<dbReference type="PANTHER" id="PTHR21015:SF22">
    <property type="entry name" value="GLYCOSYLTRANSFERASE"/>
    <property type="match status" value="1"/>
</dbReference>
<dbReference type="PANTHER" id="PTHR21015">
    <property type="entry name" value="UDP-N-ACETYLGLUCOSAMINE--N-ACETYLMURAMYL-(PENTAPEPTIDE) PYROPHOSPHORYL-UNDECAPRENOL N-ACETYLGLUCOSAMINE TRANSFERASE 1"/>
    <property type="match status" value="1"/>
</dbReference>
<dbReference type="Pfam" id="PF04101">
    <property type="entry name" value="Glyco_tran_28_C"/>
    <property type="match status" value="1"/>
</dbReference>
<dbReference type="Pfam" id="PF03033">
    <property type="entry name" value="Glyco_transf_28"/>
    <property type="match status" value="1"/>
</dbReference>
<dbReference type="SUPFAM" id="SSF53756">
    <property type="entry name" value="UDP-Glycosyltransferase/glycogen phosphorylase"/>
    <property type="match status" value="1"/>
</dbReference>
<organism>
    <name type="scientific">Trichlorobacter lovleyi (strain ATCC BAA-1151 / DSM 17278 / SZ)</name>
    <name type="common">Geobacter lovleyi</name>
    <dbReference type="NCBI Taxonomy" id="398767"/>
    <lineage>
        <taxon>Bacteria</taxon>
        <taxon>Pseudomonadati</taxon>
        <taxon>Thermodesulfobacteriota</taxon>
        <taxon>Desulfuromonadia</taxon>
        <taxon>Geobacterales</taxon>
        <taxon>Geobacteraceae</taxon>
        <taxon>Trichlorobacter</taxon>
    </lineage>
</organism>
<keyword id="KW-0131">Cell cycle</keyword>
<keyword id="KW-0132">Cell division</keyword>
<keyword id="KW-0997">Cell inner membrane</keyword>
<keyword id="KW-1003">Cell membrane</keyword>
<keyword id="KW-0133">Cell shape</keyword>
<keyword id="KW-0961">Cell wall biogenesis/degradation</keyword>
<keyword id="KW-0328">Glycosyltransferase</keyword>
<keyword id="KW-0472">Membrane</keyword>
<keyword id="KW-0573">Peptidoglycan synthesis</keyword>
<keyword id="KW-1185">Reference proteome</keyword>
<keyword id="KW-0808">Transferase</keyword>
<proteinExistence type="inferred from homology"/>
<name>MURG_TRIL1</name>